<feature type="chain" id="PRO_1000204449" description="Cytidylate kinase">
    <location>
        <begin position="1"/>
        <end position="225"/>
    </location>
</feature>
<feature type="binding site" evidence="1">
    <location>
        <begin position="12"/>
        <end position="20"/>
    </location>
    <ligand>
        <name>ATP</name>
        <dbReference type="ChEBI" id="CHEBI:30616"/>
    </ligand>
</feature>
<keyword id="KW-0067">ATP-binding</keyword>
<keyword id="KW-0963">Cytoplasm</keyword>
<keyword id="KW-0418">Kinase</keyword>
<keyword id="KW-0547">Nucleotide-binding</keyword>
<keyword id="KW-0808">Transferase</keyword>
<accession>C5BBS1</accession>
<reference key="1">
    <citation type="submission" date="2009-03" db="EMBL/GenBank/DDBJ databases">
        <title>Complete genome sequence of Edwardsiella ictaluri 93-146.</title>
        <authorList>
            <person name="Williams M.L."/>
            <person name="Gillaspy A.F."/>
            <person name="Dyer D.W."/>
            <person name="Thune R.L."/>
            <person name="Waldbieser G.C."/>
            <person name="Schuster S.C."/>
            <person name="Gipson J."/>
            <person name="Zaitshik J."/>
            <person name="Landry C."/>
            <person name="Lawrence M.L."/>
        </authorList>
    </citation>
    <scope>NUCLEOTIDE SEQUENCE [LARGE SCALE GENOMIC DNA]</scope>
    <source>
        <strain>93-146</strain>
    </source>
</reference>
<name>KCY_EDWI9</name>
<evidence type="ECO:0000255" key="1">
    <source>
        <dbReference type="HAMAP-Rule" id="MF_00238"/>
    </source>
</evidence>
<dbReference type="EC" id="2.7.4.25" evidence="1"/>
<dbReference type="EMBL" id="CP001600">
    <property type="protein sequence ID" value="ACR69626.1"/>
    <property type="molecule type" value="Genomic_DNA"/>
</dbReference>
<dbReference type="RefSeq" id="WP_015871740.1">
    <property type="nucleotide sequence ID" value="NZ_CP169062.1"/>
</dbReference>
<dbReference type="SMR" id="C5BBS1"/>
<dbReference type="STRING" id="67780.B6E78_04420"/>
<dbReference type="GeneID" id="69539374"/>
<dbReference type="KEGG" id="eic:NT01EI_2456"/>
<dbReference type="PATRIC" id="fig|634503.3.peg.2179"/>
<dbReference type="HOGENOM" id="CLU_079959_2_0_6"/>
<dbReference type="OrthoDB" id="9807434at2"/>
<dbReference type="Proteomes" id="UP000001485">
    <property type="component" value="Chromosome"/>
</dbReference>
<dbReference type="GO" id="GO:0005829">
    <property type="term" value="C:cytosol"/>
    <property type="evidence" value="ECO:0007669"/>
    <property type="project" value="TreeGrafter"/>
</dbReference>
<dbReference type="GO" id="GO:0005524">
    <property type="term" value="F:ATP binding"/>
    <property type="evidence" value="ECO:0007669"/>
    <property type="project" value="UniProtKB-UniRule"/>
</dbReference>
<dbReference type="GO" id="GO:0036430">
    <property type="term" value="F:CMP kinase activity"/>
    <property type="evidence" value="ECO:0007669"/>
    <property type="project" value="RHEA"/>
</dbReference>
<dbReference type="GO" id="GO:0036431">
    <property type="term" value="F:dCMP kinase activity"/>
    <property type="evidence" value="ECO:0007669"/>
    <property type="project" value="RHEA"/>
</dbReference>
<dbReference type="GO" id="GO:0015949">
    <property type="term" value="P:nucleobase-containing small molecule interconversion"/>
    <property type="evidence" value="ECO:0007669"/>
    <property type="project" value="TreeGrafter"/>
</dbReference>
<dbReference type="GO" id="GO:0006220">
    <property type="term" value="P:pyrimidine nucleotide metabolic process"/>
    <property type="evidence" value="ECO:0007669"/>
    <property type="project" value="UniProtKB-UniRule"/>
</dbReference>
<dbReference type="CDD" id="cd02020">
    <property type="entry name" value="CMPK"/>
    <property type="match status" value="1"/>
</dbReference>
<dbReference type="FunFam" id="3.40.50.300:FF:000262">
    <property type="entry name" value="Cytidylate kinase"/>
    <property type="match status" value="1"/>
</dbReference>
<dbReference type="Gene3D" id="3.40.50.300">
    <property type="entry name" value="P-loop containing nucleotide triphosphate hydrolases"/>
    <property type="match status" value="1"/>
</dbReference>
<dbReference type="HAMAP" id="MF_00238">
    <property type="entry name" value="Cytidyl_kinase_type1"/>
    <property type="match status" value="1"/>
</dbReference>
<dbReference type="InterPro" id="IPR003136">
    <property type="entry name" value="Cytidylate_kin"/>
</dbReference>
<dbReference type="InterPro" id="IPR011994">
    <property type="entry name" value="Cytidylate_kinase_dom"/>
</dbReference>
<dbReference type="InterPro" id="IPR027417">
    <property type="entry name" value="P-loop_NTPase"/>
</dbReference>
<dbReference type="NCBIfam" id="TIGR00017">
    <property type="entry name" value="cmk"/>
    <property type="match status" value="1"/>
</dbReference>
<dbReference type="PANTHER" id="PTHR21299:SF2">
    <property type="entry name" value="CYTIDYLATE KINASE"/>
    <property type="match status" value="1"/>
</dbReference>
<dbReference type="PANTHER" id="PTHR21299">
    <property type="entry name" value="CYTIDYLATE KINASE/PANTOATE-BETA-ALANINE LIGASE"/>
    <property type="match status" value="1"/>
</dbReference>
<dbReference type="Pfam" id="PF02224">
    <property type="entry name" value="Cytidylate_kin"/>
    <property type="match status" value="1"/>
</dbReference>
<dbReference type="SUPFAM" id="SSF52540">
    <property type="entry name" value="P-loop containing nucleoside triphosphate hydrolases"/>
    <property type="match status" value="1"/>
</dbReference>
<protein>
    <recommendedName>
        <fullName evidence="1">Cytidylate kinase</fullName>
        <shortName evidence="1">CK</shortName>
        <ecNumber evidence="1">2.7.4.25</ecNumber>
    </recommendedName>
    <alternativeName>
        <fullName evidence="1">Cytidine monophosphate kinase</fullName>
        <shortName evidence="1">CMP kinase</shortName>
    </alternativeName>
</protein>
<proteinExistence type="inferred from homology"/>
<comment type="catalytic activity">
    <reaction evidence="1">
        <text>CMP + ATP = CDP + ADP</text>
        <dbReference type="Rhea" id="RHEA:11600"/>
        <dbReference type="ChEBI" id="CHEBI:30616"/>
        <dbReference type="ChEBI" id="CHEBI:58069"/>
        <dbReference type="ChEBI" id="CHEBI:60377"/>
        <dbReference type="ChEBI" id="CHEBI:456216"/>
        <dbReference type="EC" id="2.7.4.25"/>
    </reaction>
</comment>
<comment type="catalytic activity">
    <reaction evidence="1">
        <text>dCMP + ATP = dCDP + ADP</text>
        <dbReference type="Rhea" id="RHEA:25094"/>
        <dbReference type="ChEBI" id="CHEBI:30616"/>
        <dbReference type="ChEBI" id="CHEBI:57566"/>
        <dbReference type="ChEBI" id="CHEBI:58593"/>
        <dbReference type="ChEBI" id="CHEBI:456216"/>
        <dbReference type="EC" id="2.7.4.25"/>
    </reaction>
</comment>
<comment type="subcellular location">
    <subcellularLocation>
        <location evidence="1">Cytoplasm</location>
    </subcellularLocation>
</comment>
<comment type="similarity">
    <text evidence="1">Belongs to the cytidylate kinase family. Type 1 subfamily.</text>
</comment>
<organism>
    <name type="scientific">Edwardsiella ictaluri (strain 93-146)</name>
    <dbReference type="NCBI Taxonomy" id="634503"/>
    <lineage>
        <taxon>Bacteria</taxon>
        <taxon>Pseudomonadati</taxon>
        <taxon>Pseudomonadota</taxon>
        <taxon>Gammaproteobacteria</taxon>
        <taxon>Enterobacterales</taxon>
        <taxon>Hafniaceae</taxon>
        <taxon>Edwardsiella</taxon>
    </lineage>
</organism>
<gene>
    <name evidence="1" type="primary">cmk</name>
    <name type="ordered locus">NT01EI_2456</name>
</gene>
<sequence length="225" mass="24226">MTAIVPVITVDGPSGAGKGTLCKALAQALGWHLLDSGAIYRVLALAALHHQVNIDSEEALVPLAAHLDVRFDAAEGDLRVILEGEDVSTAIRTETVGNTASRAAAFPRVREALLRRQRAFREAPGLIADGRDMGTVVFPDAPVKIFLDASAEERAHRRMLQLQGKGFDVNFESLLAEIKERDFRDRNRAVAPLVPAVGALQLDSTSLSIEQVIAQALAHARQTLV</sequence>